<comment type="similarity">
    <text evidence="1">Belongs to the UPF0250 family.</text>
</comment>
<feature type="chain" id="PRO_1000061909" description="UPF0250 protein YE3006">
    <location>
        <begin position="1"/>
        <end position="87"/>
    </location>
</feature>
<protein>
    <recommendedName>
        <fullName evidence="1">UPF0250 protein YE3006</fullName>
    </recommendedName>
</protein>
<dbReference type="EMBL" id="AM286415">
    <property type="protein sequence ID" value="CAL13045.1"/>
    <property type="molecule type" value="Genomic_DNA"/>
</dbReference>
<dbReference type="RefSeq" id="YP_001007195.1">
    <property type="nucleotide sequence ID" value="NC_008800.1"/>
</dbReference>
<dbReference type="SMR" id="A1JPR7"/>
<dbReference type="KEGG" id="yen:YE3006"/>
<dbReference type="PATRIC" id="fig|393305.7.peg.3201"/>
<dbReference type="eggNOG" id="COG2921">
    <property type="taxonomic scope" value="Bacteria"/>
</dbReference>
<dbReference type="HOGENOM" id="CLU_161438_2_1_6"/>
<dbReference type="OrthoDB" id="9793424at2"/>
<dbReference type="Proteomes" id="UP000000642">
    <property type="component" value="Chromosome"/>
</dbReference>
<dbReference type="GO" id="GO:0005829">
    <property type="term" value="C:cytosol"/>
    <property type="evidence" value="ECO:0007669"/>
    <property type="project" value="TreeGrafter"/>
</dbReference>
<dbReference type="FunFam" id="3.30.70.260:FF:000002">
    <property type="entry name" value="UPF0250 protein YbeD"/>
    <property type="match status" value="1"/>
</dbReference>
<dbReference type="Gene3D" id="3.30.70.260">
    <property type="match status" value="1"/>
</dbReference>
<dbReference type="HAMAP" id="MF_00659">
    <property type="entry name" value="UPF0250"/>
    <property type="match status" value="1"/>
</dbReference>
<dbReference type="InterPro" id="IPR007454">
    <property type="entry name" value="UPF0250_YbeD-like"/>
</dbReference>
<dbReference type="InterPro" id="IPR027471">
    <property type="entry name" value="YbeD-like_sf"/>
</dbReference>
<dbReference type="NCBIfam" id="NF003447">
    <property type="entry name" value="PRK04998.1"/>
    <property type="match status" value="1"/>
</dbReference>
<dbReference type="PANTHER" id="PTHR38036">
    <property type="entry name" value="UPF0250 PROTEIN YBED"/>
    <property type="match status" value="1"/>
</dbReference>
<dbReference type="PANTHER" id="PTHR38036:SF1">
    <property type="entry name" value="UPF0250 PROTEIN YBED"/>
    <property type="match status" value="1"/>
</dbReference>
<dbReference type="Pfam" id="PF04359">
    <property type="entry name" value="DUF493"/>
    <property type="match status" value="1"/>
</dbReference>
<dbReference type="SUPFAM" id="SSF117991">
    <property type="entry name" value="YbeD/HP0495-like"/>
    <property type="match status" value="1"/>
</dbReference>
<gene>
    <name type="ordered locus">YE3006</name>
</gene>
<name>Y3006_YERE8</name>
<accession>A1JPR7</accession>
<organism>
    <name type="scientific">Yersinia enterocolitica serotype O:8 / biotype 1B (strain NCTC 13174 / 8081)</name>
    <dbReference type="NCBI Taxonomy" id="393305"/>
    <lineage>
        <taxon>Bacteria</taxon>
        <taxon>Pseudomonadati</taxon>
        <taxon>Pseudomonadota</taxon>
        <taxon>Gammaproteobacteria</taxon>
        <taxon>Enterobacterales</taxon>
        <taxon>Yersiniaceae</taxon>
        <taxon>Yersinia</taxon>
    </lineage>
</organism>
<evidence type="ECO:0000255" key="1">
    <source>
        <dbReference type="HAMAP-Rule" id="MF_00659"/>
    </source>
</evidence>
<reference key="1">
    <citation type="journal article" date="2006" name="PLoS Genet.">
        <title>The complete genome sequence and comparative genome analysis of the high pathogenicity Yersinia enterocolitica strain 8081.</title>
        <authorList>
            <person name="Thomson N.R."/>
            <person name="Howard S."/>
            <person name="Wren B.W."/>
            <person name="Holden M.T.G."/>
            <person name="Crossman L."/>
            <person name="Challis G.L."/>
            <person name="Churcher C."/>
            <person name="Mungall K."/>
            <person name="Brooks K."/>
            <person name="Chillingworth T."/>
            <person name="Feltwell T."/>
            <person name="Abdellah Z."/>
            <person name="Hauser H."/>
            <person name="Jagels K."/>
            <person name="Maddison M."/>
            <person name="Moule S."/>
            <person name="Sanders M."/>
            <person name="Whitehead S."/>
            <person name="Quail M.A."/>
            <person name="Dougan G."/>
            <person name="Parkhill J."/>
            <person name="Prentice M.B."/>
        </authorList>
    </citation>
    <scope>NUCLEOTIDE SEQUENCE [LARGE SCALE GENOMIC DNA]</scope>
    <source>
        <strain>NCTC 13174 / 8081</strain>
    </source>
</reference>
<sequence length="87" mass="9829">MKTKLNELLEFPCPFTYKVMGIAEPQLVNQVVEVVQRHAPGDYTPEVKPSSKGNYHSVSITITATHIDQVETLYEELGNLELVRMVL</sequence>
<proteinExistence type="inferred from homology"/>